<sequence length="680" mass="71118">MSNKPTTPNLVDPKILFPAAKAAFVKLDPRQLVRNPVIFVTEAMAALVTLFFVLDVATGGGSRLFSGQIAAWLWFTVLFATFAEAVAEGRGKAQADFLRHTKSELSARKLVAPEGRETKEIPATMLKVGDLVLVQAGELIPGDGEVVEGVASVNESAITGESAPVIREAGGDRSAVTGGTEVLSDWVKVRITTAPGSTFVDRMIALIEGAQRQKTPNEIALSILLSGLTLIFLIAVVTLWGLASYSATVLSVTVLSALLVTLIPTTIGGLLSAIGIAGMDRLVRFNVIATSGRAVEAAGDVDTLLLDKTGTITFGNRMASDFLPVPGVTVEELADAALLASLADETPEGRSIVALATGEFGRGASQTGIDAVVPFTAETRLSGVDHRGRRLRKGAVDSVLRFAGLSDSKIPQEFRQAVDKVARTGGTPLAVADGNRLLGVVHLKDVVKPGIKERFSELRAMGIRTVMVTGDNPITAAAIASEAGVDDFLAEATPEDKLAYIRKEQNGGRLIAMCGDGTNDAPALAQADVGVAMQTGTQAAREAANMVDLDSSPTKLIEIVEIGKQLLMTRGSLTTFSIANDVAKYFAIIPALFVTTYPALGVLNIMGLASPQSAILSAVIFNALIIVALIPLALKGVRYRPVGAAALLRGNLLVYGLGGLVLPFAGIKLIDLAVSNLNLV</sequence>
<geneLocation type="plasmid">
    <name>pSymA</name>
    <name>megaplasmid 1</name>
</geneLocation>
<organism>
    <name type="scientific">Rhizobium meliloti (strain 1021)</name>
    <name type="common">Ensifer meliloti</name>
    <name type="synonym">Sinorhizobium meliloti</name>
    <dbReference type="NCBI Taxonomy" id="266834"/>
    <lineage>
        <taxon>Bacteria</taxon>
        <taxon>Pseudomonadati</taxon>
        <taxon>Pseudomonadota</taxon>
        <taxon>Alphaproteobacteria</taxon>
        <taxon>Hyphomicrobiales</taxon>
        <taxon>Rhizobiaceae</taxon>
        <taxon>Sinorhizobium/Ensifer group</taxon>
        <taxon>Sinorhizobium</taxon>
    </lineage>
</organism>
<protein>
    <recommendedName>
        <fullName evidence="1">Potassium-transporting ATPase ATP-binding subunit</fullName>
        <ecNumber evidence="1">7.2.2.6</ecNumber>
    </recommendedName>
    <alternativeName>
        <fullName evidence="1">ATP phosphohydrolase [potassium-transporting] B chain</fullName>
    </alternativeName>
    <alternativeName>
        <fullName evidence="1">Potassium-binding and translocating subunit B</fullName>
    </alternativeName>
    <alternativeName>
        <fullName evidence="1">Potassium-translocating ATPase B chain</fullName>
    </alternativeName>
</protein>
<dbReference type="EC" id="7.2.2.6" evidence="1"/>
<dbReference type="EMBL" id="AE006469">
    <property type="protein sequence ID" value="AAK65912.1"/>
    <property type="molecule type" value="Genomic_DNA"/>
</dbReference>
<dbReference type="PIR" id="F95418">
    <property type="entry name" value="F95418"/>
</dbReference>
<dbReference type="RefSeq" id="NP_436500.1">
    <property type="nucleotide sequence ID" value="NC_003037.1"/>
</dbReference>
<dbReference type="RefSeq" id="WP_010968197.1">
    <property type="nucleotide sequence ID" value="NC_003037.1"/>
</dbReference>
<dbReference type="SMR" id="Q92XJ0"/>
<dbReference type="EnsemblBacteria" id="AAK65912">
    <property type="protein sequence ID" value="AAK65912"/>
    <property type="gene ID" value="SMa2331"/>
</dbReference>
<dbReference type="KEGG" id="sme:SMa2331"/>
<dbReference type="PATRIC" id="fig|266834.11.peg.1307"/>
<dbReference type="HOGENOM" id="CLU_025728_2_0_5"/>
<dbReference type="OrthoDB" id="9813266at2"/>
<dbReference type="Proteomes" id="UP000001976">
    <property type="component" value="Plasmid pSymA"/>
</dbReference>
<dbReference type="GO" id="GO:0005886">
    <property type="term" value="C:plasma membrane"/>
    <property type="evidence" value="ECO:0007669"/>
    <property type="project" value="UniProtKB-SubCell"/>
</dbReference>
<dbReference type="GO" id="GO:0005524">
    <property type="term" value="F:ATP binding"/>
    <property type="evidence" value="ECO:0007669"/>
    <property type="project" value="UniProtKB-UniRule"/>
</dbReference>
<dbReference type="GO" id="GO:0016887">
    <property type="term" value="F:ATP hydrolysis activity"/>
    <property type="evidence" value="ECO:0007669"/>
    <property type="project" value="InterPro"/>
</dbReference>
<dbReference type="GO" id="GO:0000287">
    <property type="term" value="F:magnesium ion binding"/>
    <property type="evidence" value="ECO:0007669"/>
    <property type="project" value="UniProtKB-UniRule"/>
</dbReference>
<dbReference type="GO" id="GO:0008556">
    <property type="term" value="F:P-type potassium transmembrane transporter activity"/>
    <property type="evidence" value="ECO:0007669"/>
    <property type="project" value="UniProtKB-UniRule"/>
</dbReference>
<dbReference type="CDD" id="cd02078">
    <property type="entry name" value="P-type_ATPase_K"/>
    <property type="match status" value="1"/>
</dbReference>
<dbReference type="FunFam" id="2.70.150.10:FF:000033">
    <property type="entry name" value="Potassium-transporting ATPase ATP-binding subunit"/>
    <property type="match status" value="1"/>
</dbReference>
<dbReference type="FunFam" id="3.40.1110.10:FF:000007">
    <property type="entry name" value="Potassium-transporting ATPase ATP-binding subunit"/>
    <property type="match status" value="1"/>
</dbReference>
<dbReference type="Gene3D" id="3.40.1110.10">
    <property type="entry name" value="Calcium-transporting ATPase, cytoplasmic domain N"/>
    <property type="match status" value="1"/>
</dbReference>
<dbReference type="Gene3D" id="2.70.150.10">
    <property type="entry name" value="Calcium-transporting ATPase, cytoplasmic transduction domain A"/>
    <property type="match status" value="1"/>
</dbReference>
<dbReference type="Gene3D" id="3.40.50.1000">
    <property type="entry name" value="HAD superfamily/HAD-like"/>
    <property type="match status" value="1"/>
</dbReference>
<dbReference type="HAMAP" id="MF_00285">
    <property type="entry name" value="KdpB"/>
    <property type="match status" value="1"/>
</dbReference>
<dbReference type="InterPro" id="IPR023299">
    <property type="entry name" value="ATPase_P-typ_cyto_dom_N"/>
</dbReference>
<dbReference type="InterPro" id="IPR018303">
    <property type="entry name" value="ATPase_P-typ_P_site"/>
</dbReference>
<dbReference type="InterPro" id="IPR023298">
    <property type="entry name" value="ATPase_P-typ_TM_dom_sf"/>
</dbReference>
<dbReference type="InterPro" id="IPR008250">
    <property type="entry name" value="ATPase_P-typ_transduc_dom_A_sf"/>
</dbReference>
<dbReference type="InterPro" id="IPR036412">
    <property type="entry name" value="HAD-like_sf"/>
</dbReference>
<dbReference type="InterPro" id="IPR023214">
    <property type="entry name" value="HAD_sf"/>
</dbReference>
<dbReference type="InterPro" id="IPR006391">
    <property type="entry name" value="P-type_ATPase_bsu_IA"/>
</dbReference>
<dbReference type="InterPro" id="IPR001757">
    <property type="entry name" value="P_typ_ATPase"/>
</dbReference>
<dbReference type="InterPro" id="IPR044492">
    <property type="entry name" value="P_typ_ATPase_HD_dom"/>
</dbReference>
<dbReference type="NCBIfam" id="TIGR01494">
    <property type="entry name" value="ATPase_P-type"/>
    <property type="match status" value="2"/>
</dbReference>
<dbReference type="NCBIfam" id="TIGR01497">
    <property type="entry name" value="kdpB"/>
    <property type="match status" value="1"/>
</dbReference>
<dbReference type="PANTHER" id="PTHR43743">
    <property type="entry name" value="POTASSIUM-TRANSPORTING ATPASE ATP-BINDING SUBUNIT"/>
    <property type="match status" value="1"/>
</dbReference>
<dbReference type="PANTHER" id="PTHR43743:SF1">
    <property type="entry name" value="POTASSIUM-TRANSPORTING ATPASE ATP-BINDING SUBUNIT"/>
    <property type="match status" value="1"/>
</dbReference>
<dbReference type="Pfam" id="PF00122">
    <property type="entry name" value="E1-E2_ATPase"/>
    <property type="match status" value="1"/>
</dbReference>
<dbReference type="Pfam" id="PF00702">
    <property type="entry name" value="Hydrolase"/>
    <property type="match status" value="1"/>
</dbReference>
<dbReference type="PRINTS" id="PR00119">
    <property type="entry name" value="CATATPASE"/>
</dbReference>
<dbReference type="SFLD" id="SFLDS00003">
    <property type="entry name" value="Haloacid_Dehalogenase"/>
    <property type="match status" value="1"/>
</dbReference>
<dbReference type="SFLD" id="SFLDF00027">
    <property type="entry name" value="p-type_atpase"/>
    <property type="match status" value="1"/>
</dbReference>
<dbReference type="SUPFAM" id="SSF81653">
    <property type="entry name" value="Calcium ATPase, transduction domain A"/>
    <property type="match status" value="1"/>
</dbReference>
<dbReference type="SUPFAM" id="SSF81665">
    <property type="entry name" value="Calcium ATPase, transmembrane domain M"/>
    <property type="match status" value="1"/>
</dbReference>
<dbReference type="SUPFAM" id="SSF56784">
    <property type="entry name" value="HAD-like"/>
    <property type="match status" value="1"/>
</dbReference>
<dbReference type="PROSITE" id="PS00154">
    <property type="entry name" value="ATPASE_E1_E2"/>
    <property type="match status" value="1"/>
</dbReference>
<proteinExistence type="inferred from homology"/>
<comment type="function">
    <text evidence="1">Part of the high-affinity ATP-driven potassium transport (or Kdp) system, which catalyzes the hydrolysis of ATP coupled with the electrogenic transport of potassium into the cytoplasm. This subunit is responsible for energy coupling to the transport system and for the release of the potassium ions to the cytoplasm.</text>
</comment>
<comment type="catalytic activity">
    <reaction evidence="1">
        <text>K(+)(out) + ATP + H2O = K(+)(in) + ADP + phosphate + H(+)</text>
        <dbReference type="Rhea" id="RHEA:16777"/>
        <dbReference type="ChEBI" id="CHEBI:15377"/>
        <dbReference type="ChEBI" id="CHEBI:15378"/>
        <dbReference type="ChEBI" id="CHEBI:29103"/>
        <dbReference type="ChEBI" id="CHEBI:30616"/>
        <dbReference type="ChEBI" id="CHEBI:43474"/>
        <dbReference type="ChEBI" id="CHEBI:456216"/>
        <dbReference type="EC" id="7.2.2.6"/>
    </reaction>
    <physiologicalReaction direction="left-to-right" evidence="1">
        <dbReference type="Rhea" id="RHEA:16778"/>
    </physiologicalReaction>
</comment>
<comment type="subunit">
    <text evidence="1">The system is composed of three essential subunits: KdpA, KdpB and KdpC.</text>
</comment>
<comment type="subcellular location">
    <subcellularLocation>
        <location evidence="1">Cell inner membrane</location>
        <topology evidence="1">Multi-pass membrane protein</topology>
    </subcellularLocation>
</comment>
<comment type="similarity">
    <text evidence="1">Belongs to the cation transport ATPase (P-type) (TC 3.A.3) family. Type IA subfamily.</text>
</comment>
<feature type="chain" id="PRO_0000046131" description="Potassium-transporting ATPase ATP-binding subunit">
    <location>
        <begin position="1"/>
        <end position="680"/>
    </location>
</feature>
<feature type="transmembrane region" description="Helical" evidence="1">
    <location>
        <begin position="37"/>
        <end position="57"/>
    </location>
</feature>
<feature type="transmembrane region" description="Helical" evidence="1">
    <location>
        <begin position="69"/>
        <end position="89"/>
    </location>
</feature>
<feature type="transmembrane region" description="Helical" evidence="1">
    <location>
        <begin position="223"/>
        <end position="243"/>
    </location>
</feature>
<feature type="transmembrane region" description="Helical" evidence="1">
    <location>
        <begin position="257"/>
        <end position="277"/>
    </location>
</feature>
<feature type="transmembrane region" description="Helical" evidence="1">
    <location>
        <begin position="586"/>
        <end position="606"/>
    </location>
</feature>
<feature type="transmembrane region" description="Helical" evidence="1">
    <location>
        <begin position="614"/>
        <end position="634"/>
    </location>
</feature>
<feature type="transmembrane region" description="Helical" evidence="1">
    <location>
        <begin position="652"/>
        <end position="672"/>
    </location>
</feature>
<feature type="active site" description="4-aspartylphosphate intermediate" evidence="1">
    <location>
        <position position="307"/>
    </location>
</feature>
<feature type="binding site" evidence="1">
    <location>
        <position position="344"/>
    </location>
    <ligand>
        <name>ATP</name>
        <dbReference type="ChEBI" id="CHEBI:30616"/>
    </ligand>
</feature>
<feature type="binding site" evidence="1">
    <location>
        <position position="348"/>
    </location>
    <ligand>
        <name>ATP</name>
        <dbReference type="ChEBI" id="CHEBI:30616"/>
    </ligand>
</feature>
<feature type="binding site" evidence="1">
    <location>
        <begin position="375"/>
        <end position="382"/>
    </location>
    <ligand>
        <name>ATP</name>
        <dbReference type="ChEBI" id="CHEBI:30616"/>
    </ligand>
</feature>
<feature type="binding site" evidence="1">
    <location>
        <position position="393"/>
    </location>
    <ligand>
        <name>ATP</name>
        <dbReference type="ChEBI" id="CHEBI:30616"/>
    </ligand>
</feature>
<feature type="binding site" evidence="1">
    <location>
        <position position="516"/>
    </location>
    <ligand>
        <name>Mg(2+)</name>
        <dbReference type="ChEBI" id="CHEBI:18420"/>
    </ligand>
</feature>
<feature type="binding site" evidence="1">
    <location>
        <position position="520"/>
    </location>
    <ligand>
        <name>Mg(2+)</name>
        <dbReference type="ChEBI" id="CHEBI:18420"/>
    </ligand>
</feature>
<gene>
    <name evidence="1" type="primary">kdpB</name>
    <name type="ordered locus">RA1254</name>
    <name type="ORF">SMa2331</name>
</gene>
<reference key="1">
    <citation type="journal article" date="2001" name="Proc. Natl. Acad. Sci. U.S.A.">
        <title>Nucleotide sequence and predicted functions of the entire Sinorhizobium meliloti pSymA megaplasmid.</title>
        <authorList>
            <person name="Barnett M.J."/>
            <person name="Fisher R.F."/>
            <person name="Jones T."/>
            <person name="Komp C."/>
            <person name="Abola A.P."/>
            <person name="Barloy-Hubler F."/>
            <person name="Bowser L."/>
            <person name="Capela D."/>
            <person name="Galibert F."/>
            <person name="Gouzy J."/>
            <person name="Gurjal M."/>
            <person name="Hong A."/>
            <person name="Huizar L."/>
            <person name="Hyman R.W."/>
            <person name="Kahn D."/>
            <person name="Kahn M.L."/>
            <person name="Kalman S."/>
            <person name="Keating D.H."/>
            <person name="Palm C."/>
            <person name="Peck M.C."/>
            <person name="Surzycki R."/>
            <person name="Wells D.H."/>
            <person name="Yeh K.-C."/>
            <person name="Davis R.W."/>
            <person name="Federspiel N.A."/>
            <person name="Long S.R."/>
        </authorList>
    </citation>
    <scope>NUCLEOTIDE SEQUENCE [LARGE SCALE GENOMIC DNA]</scope>
    <source>
        <strain>1021</strain>
    </source>
</reference>
<reference key="2">
    <citation type="journal article" date="2001" name="Science">
        <title>The composite genome of the legume symbiont Sinorhizobium meliloti.</title>
        <authorList>
            <person name="Galibert F."/>
            <person name="Finan T.M."/>
            <person name="Long S.R."/>
            <person name="Puehler A."/>
            <person name="Abola P."/>
            <person name="Ampe F."/>
            <person name="Barloy-Hubler F."/>
            <person name="Barnett M.J."/>
            <person name="Becker A."/>
            <person name="Boistard P."/>
            <person name="Bothe G."/>
            <person name="Boutry M."/>
            <person name="Bowser L."/>
            <person name="Buhrmester J."/>
            <person name="Cadieu E."/>
            <person name="Capela D."/>
            <person name="Chain P."/>
            <person name="Cowie A."/>
            <person name="Davis R.W."/>
            <person name="Dreano S."/>
            <person name="Federspiel N.A."/>
            <person name="Fisher R.F."/>
            <person name="Gloux S."/>
            <person name="Godrie T."/>
            <person name="Goffeau A."/>
            <person name="Golding B."/>
            <person name="Gouzy J."/>
            <person name="Gurjal M."/>
            <person name="Hernandez-Lucas I."/>
            <person name="Hong A."/>
            <person name="Huizar L."/>
            <person name="Hyman R.W."/>
            <person name="Jones T."/>
            <person name="Kahn D."/>
            <person name="Kahn M.L."/>
            <person name="Kalman S."/>
            <person name="Keating D.H."/>
            <person name="Kiss E."/>
            <person name="Komp C."/>
            <person name="Lelaure V."/>
            <person name="Masuy D."/>
            <person name="Palm C."/>
            <person name="Peck M.C."/>
            <person name="Pohl T.M."/>
            <person name="Portetelle D."/>
            <person name="Purnelle B."/>
            <person name="Ramsperger U."/>
            <person name="Surzycki R."/>
            <person name="Thebault P."/>
            <person name="Vandenbol M."/>
            <person name="Vorhoelter F.J."/>
            <person name="Weidner S."/>
            <person name="Wells D.H."/>
            <person name="Wong K."/>
            <person name="Yeh K.-C."/>
            <person name="Batut J."/>
        </authorList>
    </citation>
    <scope>NUCLEOTIDE SEQUENCE [LARGE SCALE GENOMIC DNA]</scope>
    <source>
        <strain>1021</strain>
    </source>
</reference>
<accession>Q92XJ0</accession>
<evidence type="ECO:0000255" key="1">
    <source>
        <dbReference type="HAMAP-Rule" id="MF_00285"/>
    </source>
</evidence>
<keyword id="KW-0067">ATP-binding</keyword>
<keyword id="KW-0997">Cell inner membrane</keyword>
<keyword id="KW-1003">Cell membrane</keyword>
<keyword id="KW-0406">Ion transport</keyword>
<keyword id="KW-0460">Magnesium</keyword>
<keyword id="KW-0472">Membrane</keyword>
<keyword id="KW-0479">Metal-binding</keyword>
<keyword id="KW-0547">Nucleotide-binding</keyword>
<keyword id="KW-0597">Phosphoprotein</keyword>
<keyword id="KW-0614">Plasmid</keyword>
<keyword id="KW-0630">Potassium</keyword>
<keyword id="KW-0633">Potassium transport</keyword>
<keyword id="KW-1185">Reference proteome</keyword>
<keyword id="KW-1278">Translocase</keyword>
<keyword id="KW-0812">Transmembrane</keyword>
<keyword id="KW-1133">Transmembrane helix</keyword>
<keyword id="KW-0813">Transport</keyword>
<name>KDPB_RHIME</name>